<gene>
    <name evidence="5" type="primary">ZIPCO</name>
    <name evidence="6" type="ORF">PF3D7_1022300</name>
</gene>
<evidence type="ECO:0000255" key="1"/>
<evidence type="ECO:0000255" key="2">
    <source>
        <dbReference type="PROSITE-ProRule" id="PRU00498"/>
    </source>
</evidence>
<evidence type="ECO:0000269" key="3">
    <source>
    </source>
</evidence>
<evidence type="ECO:0000303" key="4">
    <source>
    </source>
</evidence>
<evidence type="ECO:0000305" key="5"/>
<evidence type="ECO:0000312" key="6">
    <source>
        <dbReference type="EMBL" id="CZT98478.1"/>
    </source>
</evidence>
<evidence type="ECO:0000312" key="7">
    <source>
        <dbReference type="Proteomes" id="UP000001450"/>
    </source>
</evidence>
<keyword id="KW-0968">Cytoplasmic vesicle</keyword>
<keyword id="KW-0325">Glycoprotein</keyword>
<keyword id="KW-0406">Ion transport</keyword>
<keyword id="KW-0408">Iron</keyword>
<keyword id="KW-0410">Iron transport</keyword>
<keyword id="KW-0472">Membrane</keyword>
<keyword id="KW-1185">Reference proteome</keyword>
<keyword id="KW-0812">Transmembrane</keyword>
<keyword id="KW-1133">Transmembrane helix</keyword>
<keyword id="KW-0813">Transport</keyword>
<dbReference type="EMBL" id="LN999944">
    <property type="protein sequence ID" value="CZT98478.1"/>
    <property type="molecule type" value="Genomic_DNA"/>
</dbReference>
<dbReference type="RefSeq" id="XP_001347500.2">
    <property type="nucleotide sequence ID" value="XM_001347464.2"/>
</dbReference>
<dbReference type="STRING" id="36329.Q8IJI1"/>
<dbReference type="TCDB" id="2.A.5.3.12">
    <property type="family name" value="the zinc (zn(2+))-iron (fe(2+)) permease (zip) family"/>
</dbReference>
<dbReference type="SwissPalm" id="Q8IJI1"/>
<dbReference type="PaxDb" id="5833-PF10_0216"/>
<dbReference type="EnsemblProtists" id="CZT98478">
    <property type="protein sequence ID" value="CZT98478"/>
    <property type="gene ID" value="PF3D7_1022300"/>
</dbReference>
<dbReference type="GeneID" id="810373"/>
<dbReference type="KEGG" id="pfa:PF3D7_1022300"/>
<dbReference type="VEuPathDB" id="PlasmoDB:PF3D7_1022300"/>
<dbReference type="HOGENOM" id="CLU_916666_0_0_1"/>
<dbReference type="InParanoid" id="Q8IJI1"/>
<dbReference type="OMA" id="IFIECVA"/>
<dbReference type="OrthoDB" id="448280at2759"/>
<dbReference type="PhylomeDB" id="Q8IJI1"/>
<dbReference type="Reactome" id="R-PFA-442380">
    <property type="pathway name" value="Zinc influx into cells by the SLC39 gene family"/>
</dbReference>
<dbReference type="Proteomes" id="UP000001450">
    <property type="component" value="Chromosome 10"/>
</dbReference>
<dbReference type="GO" id="GO:0016020">
    <property type="term" value="C:membrane"/>
    <property type="evidence" value="ECO:0000318"/>
    <property type="project" value="GO_Central"/>
</dbReference>
<dbReference type="GO" id="GO:0005385">
    <property type="term" value="F:zinc ion transmembrane transporter activity"/>
    <property type="evidence" value="ECO:0000318"/>
    <property type="project" value="GO_Central"/>
</dbReference>
<dbReference type="GO" id="GO:0071577">
    <property type="term" value="P:zinc ion transmembrane transport"/>
    <property type="evidence" value="ECO:0000318"/>
    <property type="project" value="GO_Central"/>
</dbReference>
<dbReference type="InterPro" id="IPR003689">
    <property type="entry name" value="ZIP"/>
</dbReference>
<dbReference type="PANTHER" id="PTHR11040:SF198">
    <property type="entry name" value="METAL HOMEOSTASIS FACTOR ATX2"/>
    <property type="match status" value="1"/>
</dbReference>
<dbReference type="PANTHER" id="PTHR11040">
    <property type="entry name" value="ZINC/IRON TRANSPORTER"/>
    <property type="match status" value="1"/>
</dbReference>
<dbReference type="Pfam" id="PF02535">
    <property type="entry name" value="Zip"/>
    <property type="match status" value="1"/>
</dbReference>
<accession>Q8IJI1</accession>
<feature type="chain" id="PRO_0000462405" description="Putative metal ion transporter ZIPCO">
    <location>
        <begin position="1"/>
        <end position="325"/>
    </location>
</feature>
<feature type="transmembrane region" description="Helical" evidence="1">
    <location>
        <begin position="5"/>
        <end position="25"/>
    </location>
</feature>
<feature type="transmembrane region" description="Helical" evidence="1">
    <location>
        <begin position="46"/>
        <end position="66"/>
    </location>
</feature>
<feature type="transmembrane region" description="Helical" evidence="1">
    <location>
        <begin position="74"/>
        <end position="94"/>
    </location>
</feature>
<feature type="transmembrane region" description="Helical" evidence="1">
    <location>
        <begin position="179"/>
        <end position="199"/>
    </location>
</feature>
<feature type="transmembrane region" description="Helical" evidence="1">
    <location>
        <begin position="239"/>
        <end position="259"/>
    </location>
</feature>
<feature type="transmembrane region" description="Helical" evidence="1">
    <location>
        <begin position="264"/>
        <end position="284"/>
    </location>
</feature>
<feature type="transmembrane region" description="Helical" evidence="1">
    <location>
        <begin position="296"/>
        <end position="316"/>
    </location>
</feature>
<feature type="glycosylation site" description="N-linked (GlcNAc...) asparagine" evidence="2">
    <location>
        <position position="106"/>
    </location>
</feature>
<feature type="glycosylation site" description="N-linked (GlcNAc...) asparagine" evidence="2">
    <location>
        <position position="160"/>
    </location>
</feature>
<protein>
    <recommendedName>
        <fullName evidence="5">Putative metal ion transporter ZIPCO</fullName>
    </recommendedName>
    <alternativeName>
        <fullName evidence="4">ZIP domain-containing protein</fullName>
        <shortName evidence="4">PfZIPCO</shortName>
    </alternativeName>
</protein>
<organism evidence="7">
    <name type="scientific">Plasmodium falciparum (isolate 3D7)</name>
    <dbReference type="NCBI Taxonomy" id="36329"/>
    <lineage>
        <taxon>Eukaryota</taxon>
        <taxon>Sar</taxon>
        <taxon>Alveolata</taxon>
        <taxon>Apicomplexa</taxon>
        <taxon>Aconoidasida</taxon>
        <taxon>Haemosporida</taxon>
        <taxon>Plasmodiidae</taxon>
        <taxon>Plasmodium</taxon>
        <taxon>Plasmodium (Laverania)</taxon>
    </lineage>
</organism>
<comment type="function">
    <text evidence="4">Putative transporter for the divalent zinc and iron cations.</text>
</comment>
<comment type="subcellular location">
    <subcellularLocation>
        <location evidence="3">Cytoplasmic vesicle membrane</location>
        <topology evidence="1">Multi-pass membrane protein</topology>
    </subcellularLocation>
</comment>
<comment type="developmental stage">
    <text evidence="3">Expressed in blood stages (at protein level).</text>
</comment>
<comment type="induction">
    <text evidence="3">Expression is modulated by the levels of iron ions in the environment.</text>
</comment>
<comment type="disruption phenotype">
    <text evidence="3">Targeted gene disruption results in increased growth rates of blood stage parasites.</text>
</comment>
<name>ZIPCO_PLAF7</name>
<reference evidence="7" key="1">
    <citation type="journal article" date="2002" name="Nature">
        <title>Genome sequence of the human malaria parasite Plasmodium falciparum.</title>
        <authorList>
            <person name="Gardner M.J."/>
            <person name="Hall N."/>
            <person name="Fung E."/>
            <person name="White O."/>
            <person name="Berriman M."/>
            <person name="Hyman R.W."/>
            <person name="Carlton J.M."/>
            <person name="Pain A."/>
            <person name="Nelson K.E."/>
            <person name="Bowman S."/>
            <person name="Paulsen I.T."/>
            <person name="James K.D."/>
            <person name="Eisen J.A."/>
            <person name="Rutherford K.M."/>
            <person name="Salzberg S.L."/>
            <person name="Craig A."/>
            <person name="Kyes S."/>
            <person name="Chan M.-S."/>
            <person name="Nene V."/>
            <person name="Shallom S.J."/>
            <person name="Suh B."/>
            <person name="Peterson J."/>
            <person name="Angiuoli S."/>
            <person name="Pertea M."/>
            <person name="Allen J."/>
            <person name="Selengut J."/>
            <person name="Haft D."/>
            <person name="Mather M.W."/>
            <person name="Vaidya A.B."/>
            <person name="Martin D.M.A."/>
            <person name="Fairlamb A.H."/>
            <person name="Fraunholz M.J."/>
            <person name="Roos D.S."/>
            <person name="Ralph S.A."/>
            <person name="McFadden G.I."/>
            <person name="Cummings L.M."/>
            <person name="Subramanian G.M."/>
            <person name="Mungall C."/>
            <person name="Venter J.C."/>
            <person name="Carucci D.J."/>
            <person name="Hoffman S.L."/>
            <person name="Newbold C."/>
            <person name="Davis R.W."/>
            <person name="Fraser C.M."/>
            <person name="Barrell B.G."/>
        </authorList>
    </citation>
    <scope>NUCLEOTIDE SEQUENCE [LARGE SCALE GENOMIC DNA]</scope>
    <source>
        <strain evidence="7">3D7</strain>
    </source>
</reference>
<reference evidence="5" key="2">
    <citation type="journal article" date="2024" name="Front. Cell. Infect. Microbiol.">
        <title>Iron transport pathways in the human malaria parasite Plasmodium falciparum revealed by RNA-sequencing.</title>
        <authorList>
            <person name="Wunderlich J."/>
            <person name="Kotov V."/>
            <person name="Votborg-Novel L."/>
            <person name="Ntalla C."/>
            <person name="Geffken M."/>
            <person name="Peine S."/>
            <person name="Portugal S."/>
            <person name="Strauss J."/>
        </authorList>
    </citation>
    <scope>FUNCTION</scope>
    <scope>SUBCELLULAR LOCATION</scope>
    <scope>DEVELOPMENTAL STAGE</scope>
    <scope>INDUCTION</scope>
    <scope>DISRUPTION PHENOTYPE</scope>
</reference>
<proteinExistence type="evidence at protein level"/>
<sequence>MWLSTFLALLIFVECVIVVYIPAYIESKLSKIKKNRFFNMENFENIASGAILALAFLHMLPEVIILSNKKNMNLYYIFILVLVSVTFLNITDILYDHHFESTFDVNCTLACENSNNQIKNINDKEITTNYIDIKSNEVIDLELKAMDTNINNNNNNNNNNKTDPCKTNIFFEIFKSNSFFIVLSLFIHSFIEGLLMGSLKDKNAIIIVGLSMLAHKWAECLIVYKNVVNKIENPLLASIYAWSFILSLPLGVFIAIFSFPSNEFVEIIFSSIACGFFLYLSFNMTKEIKITKSNKHFISFSYFLGVGGMSTLMILFNSFESNNII</sequence>